<protein>
    <recommendedName>
        <fullName>Sentrin-specific protease 6</fullName>
        <ecNumber>3.4.22.-</ecNumber>
    </recommendedName>
    <alternativeName>
        <fullName>SUMO-1-specific protease 1</fullName>
    </alternativeName>
    <alternativeName>
        <fullName>Sentrin/SUMO-specific protease SENP6</fullName>
    </alternativeName>
</protein>
<dbReference type="EC" id="3.4.22.-"/>
<dbReference type="EMBL" id="AK129219">
    <property type="protein sequence ID" value="BAC98029.1"/>
    <property type="status" value="ALT_INIT"/>
    <property type="molecule type" value="mRNA"/>
</dbReference>
<dbReference type="EMBL" id="AC142111">
    <property type="status" value="NOT_ANNOTATED_CDS"/>
    <property type="molecule type" value="Genomic_DNA"/>
</dbReference>
<dbReference type="EMBL" id="BC061480">
    <property type="protein sequence ID" value="AAH61480.1"/>
    <property type="status" value="ALT_FRAME"/>
    <property type="molecule type" value="mRNA"/>
</dbReference>
<dbReference type="EMBL" id="AK053904">
    <property type="protein sequence ID" value="BAC35583.1"/>
    <property type="status" value="ALT_SEQ"/>
    <property type="molecule type" value="mRNA"/>
</dbReference>
<dbReference type="EMBL" id="AK083377">
    <property type="protein sequence ID" value="BAC38892.2"/>
    <property type="molecule type" value="mRNA"/>
</dbReference>
<dbReference type="CCDS" id="CCDS40705.1">
    <molecule id="Q6P7W0-1"/>
</dbReference>
<dbReference type="RefSeq" id="NP_001298039.1">
    <property type="nucleotide sequence ID" value="NM_001311110.1"/>
</dbReference>
<dbReference type="RefSeq" id="NP_666115.2">
    <molecule id="Q6P7W0-1"/>
    <property type="nucleotide sequence ID" value="NM_146003.2"/>
</dbReference>
<dbReference type="SMR" id="Q6P7W0"/>
<dbReference type="BioGRID" id="229616">
    <property type="interactions" value="7"/>
</dbReference>
<dbReference type="FunCoup" id="Q6P7W0">
    <property type="interactions" value="4933"/>
</dbReference>
<dbReference type="IntAct" id="Q6P7W0">
    <property type="interactions" value="2"/>
</dbReference>
<dbReference type="MINT" id="Q6P7W0"/>
<dbReference type="STRING" id="10090.ENSMUSP00000126777"/>
<dbReference type="MEROPS" id="C48.004"/>
<dbReference type="GlyGen" id="Q6P7W0">
    <property type="glycosylation" value="1 site, 1 O-linked glycan (1 site)"/>
</dbReference>
<dbReference type="iPTMnet" id="Q6P7W0"/>
<dbReference type="PhosphoSitePlus" id="Q6P7W0"/>
<dbReference type="jPOST" id="Q6P7W0"/>
<dbReference type="PaxDb" id="10090-ENSMUSP00000047220"/>
<dbReference type="PeptideAtlas" id="Q6P7W0"/>
<dbReference type="ProteomicsDB" id="256545">
    <molecule id="Q6P7W0-1"/>
</dbReference>
<dbReference type="ProteomicsDB" id="256546">
    <molecule id="Q6P7W0-2"/>
</dbReference>
<dbReference type="Antibodypedia" id="7742">
    <property type="antibodies" value="409 antibodies from 31 providers"/>
</dbReference>
<dbReference type="DNASU" id="215351"/>
<dbReference type="Ensembl" id="ENSMUST00000037484.15">
    <molecule id="Q6P7W0-1"/>
    <property type="protein sequence ID" value="ENSMUSP00000047220.9"/>
    <property type="gene ID" value="ENSMUSG00000034252.15"/>
</dbReference>
<dbReference type="Ensembl" id="ENSMUST00000164859.8">
    <molecule id="Q6P7W0-2"/>
    <property type="protein sequence ID" value="ENSMUSP00000128918.2"/>
    <property type="gene ID" value="ENSMUSG00000034252.15"/>
</dbReference>
<dbReference type="GeneID" id="215351"/>
<dbReference type="KEGG" id="mmu:215351"/>
<dbReference type="UCSC" id="uc009qvb.1">
    <molecule id="Q6P7W0-1"/>
    <property type="organism name" value="mouse"/>
</dbReference>
<dbReference type="AGR" id="MGI:1922075"/>
<dbReference type="CTD" id="26054"/>
<dbReference type="MGI" id="MGI:1922075">
    <property type="gene designation" value="Senp6"/>
</dbReference>
<dbReference type="VEuPathDB" id="HostDB:ENSMUSG00000034252"/>
<dbReference type="eggNOG" id="KOG0779">
    <property type="taxonomic scope" value="Eukaryota"/>
</dbReference>
<dbReference type="GeneTree" id="ENSGT00940000155724"/>
<dbReference type="InParanoid" id="Q6P7W0"/>
<dbReference type="OMA" id="HYHESAA"/>
<dbReference type="OrthoDB" id="442460at2759"/>
<dbReference type="TreeFam" id="TF350136"/>
<dbReference type="BRENDA" id="3.4.22.B74">
    <property type="organism ID" value="3474"/>
</dbReference>
<dbReference type="UniPathway" id="UPA00886"/>
<dbReference type="BioGRID-ORCS" id="215351">
    <property type="hits" value="10 hits in 77 CRISPR screens"/>
</dbReference>
<dbReference type="ChiTaRS" id="Senp6">
    <property type="organism name" value="mouse"/>
</dbReference>
<dbReference type="PRO" id="PR:Q6P7W0"/>
<dbReference type="Proteomes" id="UP000000589">
    <property type="component" value="Chromosome 9"/>
</dbReference>
<dbReference type="RNAct" id="Q6P7W0">
    <property type="molecule type" value="protein"/>
</dbReference>
<dbReference type="Bgee" id="ENSMUSG00000034252">
    <property type="expression patterns" value="Expressed in undifferentiated genital tubercle and 261 other cell types or tissues"/>
</dbReference>
<dbReference type="ExpressionAtlas" id="Q6P7W0">
    <property type="expression patterns" value="baseline and differential"/>
</dbReference>
<dbReference type="GO" id="GO:0005634">
    <property type="term" value="C:nucleus"/>
    <property type="evidence" value="ECO:0007669"/>
    <property type="project" value="UniProtKB-SubCell"/>
</dbReference>
<dbReference type="GO" id="GO:0099524">
    <property type="term" value="C:postsynaptic cytosol"/>
    <property type="evidence" value="ECO:0000314"/>
    <property type="project" value="SynGO"/>
</dbReference>
<dbReference type="GO" id="GO:0099523">
    <property type="term" value="C:presynaptic cytosol"/>
    <property type="evidence" value="ECO:0000314"/>
    <property type="project" value="SynGO"/>
</dbReference>
<dbReference type="GO" id="GO:0070139">
    <property type="term" value="F:SUMO-specific endopeptidase activity"/>
    <property type="evidence" value="ECO:0000250"/>
    <property type="project" value="UniProtKB"/>
</dbReference>
<dbReference type="GO" id="GO:0016926">
    <property type="term" value="P:protein desumoylation"/>
    <property type="evidence" value="ECO:0000250"/>
    <property type="project" value="UniProtKB"/>
</dbReference>
<dbReference type="GO" id="GO:0070646">
    <property type="term" value="P:protein modification by small protein removal"/>
    <property type="evidence" value="ECO:0000250"/>
    <property type="project" value="UniProtKB"/>
</dbReference>
<dbReference type="GO" id="GO:0016925">
    <property type="term" value="P:protein sumoylation"/>
    <property type="evidence" value="ECO:0007669"/>
    <property type="project" value="UniProtKB-UniPathway"/>
</dbReference>
<dbReference type="GO" id="GO:0006508">
    <property type="term" value="P:proteolysis"/>
    <property type="evidence" value="ECO:0007669"/>
    <property type="project" value="UniProtKB-KW"/>
</dbReference>
<dbReference type="GO" id="GO:0090234">
    <property type="term" value="P:regulation of kinetochore assembly"/>
    <property type="evidence" value="ECO:0000250"/>
    <property type="project" value="UniProtKB"/>
</dbReference>
<dbReference type="GO" id="GO:0090169">
    <property type="term" value="P:regulation of spindle assembly"/>
    <property type="evidence" value="ECO:0000250"/>
    <property type="project" value="UniProtKB"/>
</dbReference>
<dbReference type="FunFam" id="3.30.310.130:FF:000001">
    <property type="entry name" value="sentrin-specific protease 6 isoform X1"/>
    <property type="match status" value="1"/>
</dbReference>
<dbReference type="FunFam" id="1.10.418.20:FF:000005">
    <property type="entry name" value="sentrin-specific protease 6 isoform X2"/>
    <property type="match status" value="1"/>
</dbReference>
<dbReference type="FunFam" id="1.10.418.20:FF:000010">
    <property type="entry name" value="sentrin-specific protease 6 isoform X2"/>
    <property type="match status" value="1"/>
</dbReference>
<dbReference type="FunFam" id="3.30.310.130:FF:000004">
    <property type="entry name" value="sentrin-specific protease 6 isoform X6"/>
    <property type="match status" value="1"/>
</dbReference>
<dbReference type="Gene3D" id="1.10.418.20">
    <property type="match status" value="1"/>
</dbReference>
<dbReference type="Gene3D" id="3.40.395.10">
    <property type="entry name" value="Adenoviral Proteinase, Chain A"/>
    <property type="match status" value="1"/>
</dbReference>
<dbReference type="InterPro" id="IPR038765">
    <property type="entry name" value="Papain-like_cys_pep_sf"/>
</dbReference>
<dbReference type="InterPro" id="IPR003653">
    <property type="entry name" value="Peptidase_C48_C"/>
</dbReference>
<dbReference type="InterPro" id="IPR051947">
    <property type="entry name" value="Sentrin-specific_protease"/>
</dbReference>
<dbReference type="PANTHER" id="PTHR46896">
    <property type="entry name" value="SENTRIN-SPECIFIC PROTEASE"/>
    <property type="match status" value="1"/>
</dbReference>
<dbReference type="PANTHER" id="PTHR46896:SF1">
    <property type="entry name" value="SENTRIN-SPECIFIC PROTEASE 6"/>
    <property type="match status" value="1"/>
</dbReference>
<dbReference type="Pfam" id="PF02902">
    <property type="entry name" value="Peptidase_C48"/>
    <property type="match status" value="2"/>
</dbReference>
<dbReference type="SUPFAM" id="SSF54001">
    <property type="entry name" value="Cysteine proteinases"/>
    <property type="match status" value="1"/>
</dbReference>
<dbReference type="PROSITE" id="PS50600">
    <property type="entry name" value="ULP_PROTEASE"/>
    <property type="match status" value="1"/>
</dbReference>
<proteinExistence type="evidence at protein level"/>
<accession>Q6P7W0</accession>
<accession>E9QN09</accession>
<accession>Q6ZQ43</accession>
<accession>Q8BK94</accession>
<accession>Q8BUL4</accession>
<evidence type="ECO:0000250" key="1"/>
<evidence type="ECO:0000250" key="2">
    <source>
        <dbReference type="UniProtKB" id="Q9GZR1"/>
    </source>
</evidence>
<evidence type="ECO:0000256" key="3">
    <source>
        <dbReference type="SAM" id="MobiDB-lite"/>
    </source>
</evidence>
<evidence type="ECO:0000303" key="4">
    <source>
    </source>
</evidence>
<evidence type="ECO:0000305" key="5"/>
<evidence type="ECO:0007744" key="6">
    <source>
    </source>
</evidence>
<feature type="chain" id="PRO_0000267608" description="Sentrin-specific protease 6">
    <location>
        <begin position="1"/>
        <end position="1132"/>
    </location>
</feature>
<feature type="region of interest" description="Disordered" evidence="3">
    <location>
        <begin position="23"/>
        <end position="51"/>
    </location>
</feature>
<feature type="region of interest" description="Disordered" evidence="3">
    <location>
        <begin position="327"/>
        <end position="388"/>
    </location>
</feature>
<feature type="region of interest" description="Protease">
    <location>
        <begin position="686"/>
        <end position="1132"/>
    </location>
</feature>
<feature type="active site" evidence="1">
    <location>
        <position position="785"/>
    </location>
</feature>
<feature type="active site" evidence="1">
    <location>
        <position position="936"/>
    </location>
</feature>
<feature type="active site" evidence="1">
    <location>
        <position position="1049"/>
    </location>
</feature>
<feature type="modified residue" description="Phosphoserine" evidence="2">
    <location>
        <position position="41"/>
    </location>
</feature>
<feature type="modified residue" description="Phosphoserine" evidence="6">
    <location>
        <position position="355"/>
    </location>
</feature>
<feature type="modified residue" description="Phosphoserine" evidence="6">
    <location>
        <position position="356"/>
    </location>
</feature>
<feature type="modified residue" description="Phosphoserine" evidence="2">
    <location>
        <position position="371"/>
    </location>
</feature>
<feature type="modified residue" description="Phosphoserine" evidence="2">
    <location>
        <position position="373"/>
    </location>
</feature>
<feature type="modified residue" description="Phosphothreonine" evidence="2">
    <location>
        <position position="436"/>
    </location>
</feature>
<feature type="modified residue" description="Phosphoserine" evidence="2">
    <location>
        <position position="938"/>
    </location>
</feature>
<feature type="modified residue" description="Phosphoserine" evidence="2">
    <location>
        <position position="1131"/>
    </location>
</feature>
<feature type="cross-link" description="Glycyl lysine isopeptide (Lys-Gly) (interchain with G-Cter in SUMO2)" evidence="2">
    <location>
        <position position="648"/>
    </location>
</feature>
<feature type="splice variant" id="VSP_021943" description="In isoform 2." evidence="4">
    <location>
        <begin position="1"/>
        <end position="166"/>
    </location>
</feature>
<feature type="sequence conflict" description="In Ref. 3; AAH61480." evidence="5" ref="3">
    <original>G</original>
    <variation>A</variation>
    <location>
        <position position="121"/>
    </location>
</feature>
<feature type="sequence conflict" description="In Ref. 1; BAC98029 and 3; AAH61480." evidence="5" ref="1 3">
    <original>K</original>
    <variation>Q</variation>
    <location>
        <position position="375"/>
    </location>
</feature>
<feature type="sequence conflict" description="In Ref. 1; BAC98029 and 3; AAH61480." evidence="5" ref="1 3">
    <original>E</original>
    <variation>D</variation>
    <location>
        <position position="747"/>
    </location>
</feature>
<feature type="sequence conflict" description="In Ref. 1; BAC98029." evidence="5" ref="1">
    <original>M</original>
    <variation>V</variation>
    <location>
        <position position="1075"/>
    </location>
</feature>
<name>SENP6_MOUSE</name>
<keyword id="KW-0025">Alternative splicing</keyword>
<keyword id="KW-0378">Hydrolase</keyword>
<keyword id="KW-1017">Isopeptide bond</keyword>
<keyword id="KW-0539">Nucleus</keyword>
<keyword id="KW-0597">Phosphoprotein</keyword>
<keyword id="KW-0645">Protease</keyword>
<keyword id="KW-1185">Reference proteome</keyword>
<keyword id="KW-0788">Thiol protease</keyword>
<keyword id="KW-0832">Ubl conjugation</keyword>
<keyword id="KW-0833">Ubl conjugation pathway</keyword>
<comment type="function">
    <text>Protease that deconjugates SUMO1, SUMO2 and SUMO3 from targeted proteins. Processes preferentially poly-SUMO2 and poly-SUMO3 chains, but does not efficiently process SUMO1, SUMO2 and SUMO3 precursors. Deconjugates SUMO1 from RXRA, leading to transcriptional activation. Involved in chromosome alignment and spindle assembly, by regulating the kinetochore CENPH-CENPI-CENPK complex. Desumoylates PML and CENPI, protecting them from degradation by the ubiquitin ligase RNF4, which targets polysumoylated proteins for proteasomal degradation. Also desumoylates RPA1, thus preventing recruitment of RAD51 to the DNA damage foci to initiate DNA repair through homologous recombination.</text>
</comment>
<comment type="pathway">
    <text>Protein modification; protein sumoylation.</text>
</comment>
<comment type="subunit">
    <text evidence="1">Interacts with RXRA. Forms a complex with KAT5-TIP60 and UBE2I in response to UV irradiation. Interacts with RPA1 to maintain it in hyposumoylated state during S phase preventing DNA repair initiation (By similarity).</text>
</comment>
<comment type="subcellular location">
    <subcellularLocation>
        <location evidence="1">Nucleus</location>
    </subcellularLocation>
</comment>
<comment type="alternative products">
    <event type="alternative splicing"/>
    <isoform>
        <id>Q6P7W0-1</id>
        <name>1</name>
        <sequence type="displayed"/>
    </isoform>
    <isoform>
        <id>Q6P7W0-2</id>
        <name>2</name>
        <sequence type="described" ref="VSP_021943"/>
    </isoform>
</comment>
<comment type="similarity">
    <text evidence="5">Belongs to the peptidase C48 family.</text>
</comment>
<comment type="sequence caution" evidence="5">
    <conflict type="frameshift">
        <sequence resource="EMBL-CDS" id="AAH61480"/>
    </conflict>
</comment>
<comment type="sequence caution" evidence="5">
    <conflict type="miscellaneous discrepancy">
        <sequence resource="EMBL-CDS" id="BAC35583"/>
    </conflict>
    <text>Probable cloning artifact.</text>
</comment>
<comment type="sequence caution" evidence="5">
    <conflict type="erroneous initiation">
        <sequence resource="EMBL-CDS" id="BAC98029"/>
    </conflict>
    <text>Extended N-terminus.</text>
</comment>
<reference key="1">
    <citation type="journal article" date="2003" name="DNA Res.">
        <title>Prediction of the coding sequences of mouse homologues of KIAA gene: III. The complete nucleotide sequences of 500 mouse KIAA-homologous cDNAs identified by screening of terminal sequences of cDNA clones randomly sampled from size-fractionated libraries.</title>
        <authorList>
            <person name="Okazaki N."/>
            <person name="Kikuno R."/>
            <person name="Ohara R."/>
            <person name="Inamoto S."/>
            <person name="Koseki H."/>
            <person name="Hiraoka S."/>
            <person name="Saga Y."/>
            <person name="Nagase T."/>
            <person name="Ohara O."/>
            <person name="Koga H."/>
        </authorList>
    </citation>
    <scope>NUCLEOTIDE SEQUENCE [LARGE SCALE MRNA] (ISOFORM 2)</scope>
    <source>
        <tissue>Embryonic tail</tissue>
    </source>
</reference>
<reference key="2">
    <citation type="journal article" date="2009" name="PLoS Biol.">
        <title>Lineage-specific biology revealed by a finished genome assembly of the mouse.</title>
        <authorList>
            <person name="Church D.M."/>
            <person name="Goodstadt L."/>
            <person name="Hillier L.W."/>
            <person name="Zody M.C."/>
            <person name="Goldstein S."/>
            <person name="She X."/>
            <person name="Bult C.J."/>
            <person name="Agarwala R."/>
            <person name="Cherry J.L."/>
            <person name="DiCuccio M."/>
            <person name="Hlavina W."/>
            <person name="Kapustin Y."/>
            <person name="Meric P."/>
            <person name="Maglott D."/>
            <person name="Birtle Z."/>
            <person name="Marques A.C."/>
            <person name="Graves T."/>
            <person name="Zhou S."/>
            <person name="Teague B."/>
            <person name="Potamousis K."/>
            <person name="Churas C."/>
            <person name="Place M."/>
            <person name="Herschleb J."/>
            <person name="Runnheim R."/>
            <person name="Forrest D."/>
            <person name="Amos-Landgraf J."/>
            <person name="Schwartz D.C."/>
            <person name="Cheng Z."/>
            <person name="Lindblad-Toh K."/>
            <person name="Eichler E.E."/>
            <person name="Ponting C.P."/>
        </authorList>
    </citation>
    <scope>NUCLEOTIDE SEQUENCE [LARGE SCALE GENOMIC DNA]</scope>
    <source>
        <strain>C57BL/6J</strain>
    </source>
</reference>
<reference key="3">
    <citation type="journal article" date="2004" name="Genome Res.">
        <title>The status, quality, and expansion of the NIH full-length cDNA project: the Mammalian Gene Collection (MGC).</title>
        <authorList>
            <consortium name="The MGC Project Team"/>
        </authorList>
    </citation>
    <scope>NUCLEOTIDE SEQUENCE [LARGE SCALE MRNA] (ISOFORM 1)</scope>
    <source>
        <tissue>Limb</tissue>
    </source>
</reference>
<reference key="4">
    <citation type="journal article" date="2005" name="Science">
        <title>The transcriptional landscape of the mammalian genome.</title>
        <authorList>
            <person name="Carninci P."/>
            <person name="Kasukawa T."/>
            <person name="Katayama S."/>
            <person name="Gough J."/>
            <person name="Frith M.C."/>
            <person name="Maeda N."/>
            <person name="Oyama R."/>
            <person name="Ravasi T."/>
            <person name="Lenhard B."/>
            <person name="Wells C."/>
            <person name="Kodzius R."/>
            <person name="Shimokawa K."/>
            <person name="Bajic V.B."/>
            <person name="Brenner S.E."/>
            <person name="Batalov S."/>
            <person name="Forrest A.R."/>
            <person name="Zavolan M."/>
            <person name="Davis M.J."/>
            <person name="Wilming L.G."/>
            <person name="Aidinis V."/>
            <person name="Allen J.E."/>
            <person name="Ambesi-Impiombato A."/>
            <person name="Apweiler R."/>
            <person name="Aturaliya R.N."/>
            <person name="Bailey T.L."/>
            <person name="Bansal M."/>
            <person name="Baxter L."/>
            <person name="Beisel K.W."/>
            <person name="Bersano T."/>
            <person name="Bono H."/>
            <person name="Chalk A.M."/>
            <person name="Chiu K.P."/>
            <person name="Choudhary V."/>
            <person name="Christoffels A."/>
            <person name="Clutterbuck D.R."/>
            <person name="Crowe M.L."/>
            <person name="Dalla E."/>
            <person name="Dalrymple B.P."/>
            <person name="de Bono B."/>
            <person name="Della Gatta G."/>
            <person name="di Bernardo D."/>
            <person name="Down T."/>
            <person name="Engstrom P."/>
            <person name="Fagiolini M."/>
            <person name="Faulkner G."/>
            <person name="Fletcher C.F."/>
            <person name="Fukushima T."/>
            <person name="Furuno M."/>
            <person name="Futaki S."/>
            <person name="Gariboldi M."/>
            <person name="Georgii-Hemming P."/>
            <person name="Gingeras T.R."/>
            <person name="Gojobori T."/>
            <person name="Green R.E."/>
            <person name="Gustincich S."/>
            <person name="Harbers M."/>
            <person name="Hayashi Y."/>
            <person name="Hensch T.K."/>
            <person name="Hirokawa N."/>
            <person name="Hill D."/>
            <person name="Huminiecki L."/>
            <person name="Iacono M."/>
            <person name="Ikeo K."/>
            <person name="Iwama A."/>
            <person name="Ishikawa T."/>
            <person name="Jakt M."/>
            <person name="Kanapin A."/>
            <person name="Katoh M."/>
            <person name="Kawasawa Y."/>
            <person name="Kelso J."/>
            <person name="Kitamura H."/>
            <person name="Kitano H."/>
            <person name="Kollias G."/>
            <person name="Krishnan S.P."/>
            <person name="Kruger A."/>
            <person name="Kummerfeld S.K."/>
            <person name="Kurochkin I.V."/>
            <person name="Lareau L.F."/>
            <person name="Lazarevic D."/>
            <person name="Lipovich L."/>
            <person name="Liu J."/>
            <person name="Liuni S."/>
            <person name="McWilliam S."/>
            <person name="Madan Babu M."/>
            <person name="Madera M."/>
            <person name="Marchionni L."/>
            <person name="Matsuda H."/>
            <person name="Matsuzawa S."/>
            <person name="Miki H."/>
            <person name="Mignone F."/>
            <person name="Miyake S."/>
            <person name="Morris K."/>
            <person name="Mottagui-Tabar S."/>
            <person name="Mulder N."/>
            <person name="Nakano N."/>
            <person name="Nakauchi H."/>
            <person name="Ng P."/>
            <person name="Nilsson R."/>
            <person name="Nishiguchi S."/>
            <person name="Nishikawa S."/>
            <person name="Nori F."/>
            <person name="Ohara O."/>
            <person name="Okazaki Y."/>
            <person name="Orlando V."/>
            <person name="Pang K.C."/>
            <person name="Pavan W.J."/>
            <person name="Pavesi G."/>
            <person name="Pesole G."/>
            <person name="Petrovsky N."/>
            <person name="Piazza S."/>
            <person name="Reed J."/>
            <person name="Reid J.F."/>
            <person name="Ring B.Z."/>
            <person name="Ringwald M."/>
            <person name="Rost B."/>
            <person name="Ruan Y."/>
            <person name="Salzberg S.L."/>
            <person name="Sandelin A."/>
            <person name="Schneider C."/>
            <person name="Schoenbach C."/>
            <person name="Sekiguchi K."/>
            <person name="Semple C.A."/>
            <person name="Seno S."/>
            <person name="Sessa L."/>
            <person name="Sheng Y."/>
            <person name="Shibata Y."/>
            <person name="Shimada H."/>
            <person name="Shimada K."/>
            <person name="Silva D."/>
            <person name="Sinclair B."/>
            <person name="Sperling S."/>
            <person name="Stupka E."/>
            <person name="Sugiura K."/>
            <person name="Sultana R."/>
            <person name="Takenaka Y."/>
            <person name="Taki K."/>
            <person name="Tammoja K."/>
            <person name="Tan S.L."/>
            <person name="Tang S."/>
            <person name="Taylor M.S."/>
            <person name="Tegner J."/>
            <person name="Teichmann S.A."/>
            <person name="Ueda H.R."/>
            <person name="van Nimwegen E."/>
            <person name="Verardo R."/>
            <person name="Wei C.L."/>
            <person name="Yagi K."/>
            <person name="Yamanishi H."/>
            <person name="Zabarovsky E."/>
            <person name="Zhu S."/>
            <person name="Zimmer A."/>
            <person name="Hide W."/>
            <person name="Bult C."/>
            <person name="Grimmond S.M."/>
            <person name="Teasdale R.D."/>
            <person name="Liu E.T."/>
            <person name="Brusic V."/>
            <person name="Quackenbush J."/>
            <person name="Wahlestedt C."/>
            <person name="Mattick J.S."/>
            <person name="Hume D.A."/>
            <person name="Kai C."/>
            <person name="Sasaki D."/>
            <person name="Tomaru Y."/>
            <person name="Fukuda S."/>
            <person name="Kanamori-Katayama M."/>
            <person name="Suzuki M."/>
            <person name="Aoki J."/>
            <person name="Arakawa T."/>
            <person name="Iida J."/>
            <person name="Imamura K."/>
            <person name="Itoh M."/>
            <person name="Kato T."/>
            <person name="Kawaji H."/>
            <person name="Kawagashira N."/>
            <person name="Kawashima T."/>
            <person name="Kojima M."/>
            <person name="Kondo S."/>
            <person name="Konno H."/>
            <person name="Nakano K."/>
            <person name="Ninomiya N."/>
            <person name="Nishio T."/>
            <person name="Okada M."/>
            <person name="Plessy C."/>
            <person name="Shibata K."/>
            <person name="Shiraki T."/>
            <person name="Suzuki S."/>
            <person name="Tagami M."/>
            <person name="Waki K."/>
            <person name="Watahiki A."/>
            <person name="Okamura-Oho Y."/>
            <person name="Suzuki H."/>
            <person name="Kawai J."/>
            <person name="Hayashizaki Y."/>
        </authorList>
    </citation>
    <scope>NUCLEOTIDE SEQUENCE [LARGE SCALE MRNA] OF 1-231 (ISOFORM 1)</scope>
    <source>
        <strain>C57BL/6J</strain>
        <tissue>Eye</tissue>
        <tissue>Thymus</tissue>
    </source>
</reference>
<reference key="5">
    <citation type="journal article" date="2010" name="Cell">
        <title>A tissue-specific atlas of mouse protein phosphorylation and expression.</title>
        <authorList>
            <person name="Huttlin E.L."/>
            <person name="Jedrychowski M.P."/>
            <person name="Elias J.E."/>
            <person name="Goswami T."/>
            <person name="Rad R."/>
            <person name="Beausoleil S.A."/>
            <person name="Villen J."/>
            <person name="Haas W."/>
            <person name="Sowa M.E."/>
            <person name="Gygi S.P."/>
        </authorList>
    </citation>
    <scope>PHOSPHORYLATION [LARGE SCALE ANALYSIS] AT SER-355 AND SER-356</scope>
    <scope>IDENTIFICATION BY MASS SPECTROMETRY [LARGE SCALE ANALYSIS]</scope>
    <source>
        <tissue>Kidney</tissue>
        <tissue>Lung</tissue>
        <tissue>Spleen</tissue>
        <tissue>Testis</tissue>
    </source>
</reference>
<organism>
    <name type="scientific">Mus musculus</name>
    <name type="common">Mouse</name>
    <dbReference type="NCBI Taxonomy" id="10090"/>
    <lineage>
        <taxon>Eukaryota</taxon>
        <taxon>Metazoa</taxon>
        <taxon>Chordata</taxon>
        <taxon>Craniata</taxon>
        <taxon>Vertebrata</taxon>
        <taxon>Euteleostomi</taxon>
        <taxon>Mammalia</taxon>
        <taxon>Eutheria</taxon>
        <taxon>Euarchontoglires</taxon>
        <taxon>Glires</taxon>
        <taxon>Rodentia</taxon>
        <taxon>Myomorpha</taxon>
        <taxon>Muroidea</taxon>
        <taxon>Muridae</taxon>
        <taxon>Murinae</taxon>
        <taxon>Mus</taxon>
        <taxon>Mus</taxon>
    </lineage>
</organism>
<sequence>MAAGKSGGSAGALFLKALDRSESKRDGGFKNNWSFDHEEESEGDADKDGANLLSVEDEDSEISKGKKLNRRSEIVATSSGDFILKTYVRRSKTDGFKTLKGNPIGLNMLSNNKKLSESTAGTALCSGTVVHGRRFHHAHSQTPGIRTAAQRKEYPPYVHKAENSPVMLSHGQGGDHIMKKTEESESYVESEIKRKVQQKRHCSTYQLSPLSPASKKCLTHLEVSEQREYCPKCGKEKENQTKCQSCGIVFHNDLQRNCRQAVTLNEPTGPLLRTSIHQNSGGQKSQNTGLTAKKFYGNSVDKIPIDILVTCDDSRHNYIQTNGKVILPGGKIPKLTNPKERKISVSDLNDPIILSSDDDDDDDDRTKRRESTSPKPADSACSSPVPSTGKVEAALNADACRAEQEPRSSPAEPELNTIVIPRKARMKDQLGNSISTPLKRRKVNSHAAFIHPMSLSCQNFESVILNCRSIRVGTLFRLLVEPVIFSLESITIHLDGPESDPVDIILNTSDLTKCEWCNVRKLPVVFLQAIPAVYQKLSMQLQMSKEDKVWNDCKGINRITSLEEQYIILIFQTGLDHQAEVVFESIITDIGIRNNVPNFFAKILFDEANSRLVACTRSYEESIKGNCAQKENKVKTVSFESKIQLRSKQELQFFDDDEEAGESHTIFIGPVEKLIVYPPPPAKGGISVTNEDLHCLSEGEFLNDVIIDFYLKYLVLEKLKKEDADRIHIFSSFFYKRLNQRERRNPETTNLSIQQKRHGRVKTWTRHVDIFEKDFIFVPLNEAAHWFLAVVCFPGLEKPKYEPNPHYHENAVMQKTPSAEDSCVSSASEMGACSQNSAAKPVIKKMLNRKHCLAVTDSSAAQEESEPCYRRNAYSVKCSMKKKNHAINENEEPSNGESTCQDICDRTQSENGLRDECFSSVHHPDALSKIRLNYGDQSADGGKLLEDELIDFSEDQDDPDDSSDDGLLADENYSSEIGQWHLKPTVCKQPCILLMDSLRGPSRSNVVKILREYLEVEWEVKKGSKRSFSKDVMKGSNPKVPQQNNFSDCGVYVLQYVESFFENPVLNFELPMNLMNWFPPPRMKTKREEIRNIILKLQESQSKDKKLLKDSLAETSLGDGAEQYASASGGSE</sequence>
<gene>
    <name type="primary">Senp6</name>
    <name type="synonym">Kiaa0797</name>
    <name type="synonym">Susp1</name>
</gene>